<keyword id="KW-0378">Hydrolase</keyword>
<keyword id="KW-0719">Serine esterase</keyword>
<protein>
    <recommendedName>
        <fullName evidence="1">Esterase FrsA</fullName>
        <ecNumber evidence="1">3.1.1.1</ecNumber>
    </recommendedName>
</protein>
<evidence type="ECO:0000255" key="1">
    <source>
        <dbReference type="HAMAP-Rule" id="MF_01063"/>
    </source>
</evidence>
<feature type="chain" id="PRO_1000136526" description="Esterase FrsA">
    <location>
        <begin position="1"/>
        <end position="414"/>
    </location>
</feature>
<dbReference type="EC" id="3.1.1.1" evidence="1"/>
<dbReference type="EMBL" id="FM200053">
    <property type="protein sequence ID" value="CAR60498.1"/>
    <property type="molecule type" value="Genomic_DNA"/>
</dbReference>
<dbReference type="RefSeq" id="WP_000189586.1">
    <property type="nucleotide sequence ID" value="NC_011147.1"/>
</dbReference>
<dbReference type="SMR" id="B5BDQ1"/>
<dbReference type="ESTHER" id="salty-yafa">
    <property type="family name" value="Duf_1100-R"/>
</dbReference>
<dbReference type="KEGG" id="sek:SSPA2275"/>
<dbReference type="HOGENOM" id="CLU_036819_0_0_6"/>
<dbReference type="Proteomes" id="UP000001869">
    <property type="component" value="Chromosome"/>
</dbReference>
<dbReference type="GO" id="GO:0106435">
    <property type="term" value="F:carboxylesterase activity"/>
    <property type="evidence" value="ECO:0007669"/>
    <property type="project" value="UniProtKB-EC"/>
</dbReference>
<dbReference type="FunFam" id="3.40.50.1820:FF:000022">
    <property type="entry name" value="Esterase FrsA"/>
    <property type="match status" value="1"/>
</dbReference>
<dbReference type="Gene3D" id="3.40.50.1820">
    <property type="entry name" value="alpha/beta hydrolase"/>
    <property type="match status" value="1"/>
</dbReference>
<dbReference type="HAMAP" id="MF_01063">
    <property type="entry name" value="FrsA"/>
    <property type="match status" value="1"/>
</dbReference>
<dbReference type="InterPro" id="IPR029058">
    <property type="entry name" value="AB_hydrolase_fold"/>
</dbReference>
<dbReference type="InterPro" id="IPR043423">
    <property type="entry name" value="FrsA"/>
</dbReference>
<dbReference type="InterPro" id="IPR010520">
    <property type="entry name" value="FrsA-like"/>
</dbReference>
<dbReference type="InterPro" id="IPR050261">
    <property type="entry name" value="FrsA_esterase"/>
</dbReference>
<dbReference type="NCBIfam" id="NF003460">
    <property type="entry name" value="PRK05077.1"/>
    <property type="match status" value="1"/>
</dbReference>
<dbReference type="PANTHER" id="PTHR22946">
    <property type="entry name" value="DIENELACTONE HYDROLASE DOMAIN-CONTAINING PROTEIN-RELATED"/>
    <property type="match status" value="1"/>
</dbReference>
<dbReference type="PANTHER" id="PTHR22946:SF4">
    <property type="entry name" value="ESTERASE FRSA"/>
    <property type="match status" value="1"/>
</dbReference>
<dbReference type="Pfam" id="PF06500">
    <property type="entry name" value="FrsA-like"/>
    <property type="match status" value="1"/>
</dbReference>
<dbReference type="SUPFAM" id="SSF53474">
    <property type="entry name" value="alpha/beta-Hydrolases"/>
    <property type="match status" value="1"/>
</dbReference>
<proteinExistence type="inferred from homology"/>
<reference key="1">
    <citation type="journal article" date="2009" name="BMC Genomics">
        <title>Pseudogene accumulation in the evolutionary histories of Salmonella enterica serovars Paratyphi A and Typhi.</title>
        <authorList>
            <person name="Holt K.E."/>
            <person name="Thomson N.R."/>
            <person name="Wain J."/>
            <person name="Langridge G.C."/>
            <person name="Hasan R."/>
            <person name="Bhutta Z.A."/>
            <person name="Quail M.A."/>
            <person name="Norbertczak H."/>
            <person name="Walker D."/>
            <person name="Simmonds M."/>
            <person name="White B."/>
            <person name="Bason N."/>
            <person name="Mungall K."/>
            <person name="Dougan G."/>
            <person name="Parkhill J."/>
        </authorList>
    </citation>
    <scope>NUCLEOTIDE SEQUENCE [LARGE SCALE GENOMIC DNA]</scope>
    <source>
        <strain>AKU_12601</strain>
    </source>
</reference>
<comment type="function">
    <text evidence="1">Catalyzes the hydrolysis of esters.</text>
</comment>
<comment type="catalytic activity">
    <reaction evidence="1">
        <text>a carboxylic ester + H2O = an alcohol + a carboxylate + H(+)</text>
        <dbReference type="Rhea" id="RHEA:21164"/>
        <dbReference type="ChEBI" id="CHEBI:15377"/>
        <dbReference type="ChEBI" id="CHEBI:15378"/>
        <dbReference type="ChEBI" id="CHEBI:29067"/>
        <dbReference type="ChEBI" id="CHEBI:30879"/>
        <dbReference type="ChEBI" id="CHEBI:33308"/>
        <dbReference type="EC" id="3.1.1.1"/>
    </reaction>
</comment>
<comment type="similarity">
    <text evidence="1">Belongs to the FrsA family.</text>
</comment>
<organism>
    <name type="scientific">Salmonella paratyphi A (strain AKU_12601)</name>
    <dbReference type="NCBI Taxonomy" id="554290"/>
    <lineage>
        <taxon>Bacteria</taxon>
        <taxon>Pseudomonadati</taxon>
        <taxon>Pseudomonadota</taxon>
        <taxon>Gammaproteobacteria</taxon>
        <taxon>Enterobacterales</taxon>
        <taxon>Enterobacteriaceae</taxon>
        <taxon>Salmonella</taxon>
    </lineage>
</organism>
<accession>B5BDQ1</accession>
<gene>
    <name evidence="1" type="primary">frsA</name>
    <name type="ordered locus">SSPA2275</name>
</gene>
<sequence>MTQANLSETLFKPRFKHTETSTLVRRFNRGSQPPMQSALDGKNVPHWYRMINRLMWIWRGVDPREILDVQARIVMSDAERTDDDLYDTVIGYRGGNWIYEWAKQAMDWQQKACQEQDAMRSGRYWLHASTLYNIAAYPHLKGDELAEQAQALANRAYEEAAQRLPGSLREMEFAVPGGSPVTAFLHMPKGDGPFPTVLMCGGLDAMQTDYYTLYERYFAPRGIAMLTLDMPSVGFSSKWKLTQDSSLLHQHVLKALPNVPWVDHTRVAAFGFRFGANVAVRLAYLEAPRLKAVACLGPVVHALLSDPQRQSTVPEMYLDVLASRLGMHDASDEALRVELNRYSLKVQGLLGRRCPTPMLSGFWKNDPFSPEEESRLITTSSSDGKLIEIPFNPVYRNFDHALQEITDWINHRLC</sequence>
<name>FRSA_SALPK</name>